<reference key="1">
    <citation type="journal article" date="2004" name="Plant Physiol.">
        <title>Characterization of geraniol synthase from the peltate glands of sweet basil.</title>
        <authorList>
            <person name="Iijima Y."/>
            <person name="Gang D.R."/>
            <person name="Fridman E."/>
            <person name="Lewinsohn E."/>
            <person name="Pichersky E."/>
        </authorList>
    </citation>
    <scope>NUCLEOTIDE SEQUENCE [MRNA]</scope>
    <scope>FUNCTION</scope>
    <scope>CATALYTIC ACTIVITY</scope>
    <scope>TISSUE SPECIFICITY</scope>
    <scope>SUBUNIT</scope>
    <scope>COFACTOR</scope>
    <scope>BIOPHYSICOCHEMICAL PROPERTIES</scope>
    <scope>IDENTIFICATION BY MASS SPECTROMETRY</scope>
    <source>
        <strain>cv. SD</strain>
        <tissue>Peltate glandular trichome</tissue>
    </source>
</reference>
<gene>
    <name type="primary">GES</name>
</gene>
<feature type="transit peptide" description="Chloroplast" evidence="2">
    <location>
        <begin position="1"/>
        <end position="63"/>
    </location>
</feature>
<feature type="chain" id="PRO_0000418928" description="Geraniol synthase, chloroplastic">
    <location>
        <begin position="64"/>
        <end position="567"/>
    </location>
</feature>
<feature type="region of interest" description="Disordered" evidence="3">
    <location>
        <begin position="48"/>
        <end position="75"/>
    </location>
</feature>
<feature type="short sequence motif" description="DDXXD motif" evidence="1">
    <location>
        <begin position="323"/>
        <end position="327"/>
    </location>
</feature>
<feature type="compositionally biased region" description="Basic and acidic residues" evidence="3">
    <location>
        <begin position="64"/>
        <end position="75"/>
    </location>
</feature>
<feature type="binding site" evidence="1">
    <location>
        <position position="286"/>
    </location>
    <ligand>
        <name>(2E)-geranyl diphosphate</name>
        <dbReference type="ChEBI" id="CHEBI:58057"/>
    </ligand>
</feature>
<feature type="binding site" evidence="1">
    <location>
        <position position="323"/>
    </location>
    <ligand>
        <name>(2E)-geranyl diphosphate</name>
        <dbReference type="ChEBI" id="CHEBI:58057"/>
    </ligand>
</feature>
<feature type="binding site" evidence="1">
    <location>
        <position position="323"/>
    </location>
    <ligand>
        <name>Mn(2+)</name>
        <dbReference type="ChEBI" id="CHEBI:29035"/>
        <label>1</label>
    </ligand>
</feature>
<feature type="binding site" evidence="1">
    <location>
        <position position="323"/>
    </location>
    <ligand>
        <name>Mn(2+)</name>
        <dbReference type="ChEBI" id="CHEBI:29035"/>
        <label>2</label>
    </ligand>
</feature>
<feature type="binding site" evidence="1">
    <location>
        <position position="327"/>
    </location>
    <ligand>
        <name>(2E)-geranyl diphosphate</name>
        <dbReference type="ChEBI" id="CHEBI:58057"/>
    </ligand>
</feature>
<feature type="binding site" evidence="1">
    <location>
        <position position="327"/>
    </location>
    <ligand>
        <name>Mn(2+)</name>
        <dbReference type="ChEBI" id="CHEBI:29035"/>
        <label>1</label>
    </ligand>
</feature>
<feature type="binding site" evidence="1">
    <location>
        <position position="327"/>
    </location>
    <ligand>
        <name>Mn(2+)</name>
        <dbReference type="ChEBI" id="CHEBI:29035"/>
        <label>2</label>
    </ligand>
</feature>
<feature type="binding site" evidence="1">
    <location>
        <position position="466"/>
    </location>
    <ligand>
        <name>(2E)-geranyl diphosphate</name>
        <dbReference type="ChEBI" id="CHEBI:58057"/>
    </ligand>
</feature>
<feature type="binding site" evidence="1">
    <location>
        <position position="469"/>
    </location>
    <ligand>
        <name>(2E)-geranyl diphosphate</name>
        <dbReference type="ChEBI" id="CHEBI:58057"/>
    </ligand>
</feature>
<feature type="binding site" evidence="1">
    <location>
        <position position="469"/>
    </location>
    <ligand>
        <name>Mn(2+)</name>
        <dbReference type="ChEBI" id="CHEBI:29035"/>
        <label>3</label>
    </ligand>
</feature>
<feature type="binding site" evidence="1">
    <location>
        <position position="473"/>
    </location>
    <ligand>
        <name>Mn(2+)</name>
        <dbReference type="ChEBI" id="CHEBI:29035"/>
        <label>3</label>
    </ligand>
</feature>
<feature type="binding site" evidence="1">
    <location>
        <position position="477"/>
    </location>
    <ligand>
        <name>Mn(2+)</name>
        <dbReference type="ChEBI" id="CHEBI:29035"/>
        <label>3</label>
    </ligand>
</feature>
<proteinExistence type="evidence at protein level"/>
<accession>Q6USK1</accession>
<evidence type="ECO:0000250" key="1">
    <source>
        <dbReference type="UniProtKB" id="Q40577"/>
    </source>
</evidence>
<evidence type="ECO:0000255" key="2"/>
<evidence type="ECO:0000256" key="3">
    <source>
        <dbReference type="SAM" id="MobiDB-lite"/>
    </source>
</evidence>
<evidence type="ECO:0000269" key="4">
    <source>
    </source>
</evidence>
<evidence type="ECO:0000305" key="5"/>
<dbReference type="EC" id="3.1.7.11" evidence="4"/>
<dbReference type="EMBL" id="AY362553">
    <property type="protein sequence ID" value="AAR11765.1"/>
    <property type="molecule type" value="mRNA"/>
</dbReference>
<dbReference type="SMR" id="Q6USK1"/>
<dbReference type="KEGG" id="ag:AAR11765"/>
<dbReference type="BioCyc" id="MetaCyc:MONOMER-13787"/>
<dbReference type="BRENDA" id="3.1.7.11">
    <property type="organism ID" value="4385"/>
</dbReference>
<dbReference type="SABIO-RK" id="Q6USK1"/>
<dbReference type="UniPathway" id="UPA00213"/>
<dbReference type="GO" id="GO:0009507">
    <property type="term" value="C:chloroplast"/>
    <property type="evidence" value="ECO:0007669"/>
    <property type="project" value="UniProtKB-SubCell"/>
</dbReference>
<dbReference type="GO" id="GO:0016787">
    <property type="term" value="F:hydrolase activity"/>
    <property type="evidence" value="ECO:0000314"/>
    <property type="project" value="UniProtKB"/>
</dbReference>
<dbReference type="GO" id="GO:0000287">
    <property type="term" value="F:magnesium ion binding"/>
    <property type="evidence" value="ECO:0007669"/>
    <property type="project" value="InterPro"/>
</dbReference>
<dbReference type="GO" id="GO:0030145">
    <property type="term" value="F:manganese ion binding"/>
    <property type="evidence" value="ECO:0000314"/>
    <property type="project" value="UniProtKB"/>
</dbReference>
<dbReference type="GO" id="GO:0042803">
    <property type="term" value="F:protein homodimerization activity"/>
    <property type="evidence" value="ECO:0000314"/>
    <property type="project" value="UniProtKB"/>
</dbReference>
<dbReference type="GO" id="GO:0010333">
    <property type="term" value="F:terpene synthase activity"/>
    <property type="evidence" value="ECO:0007669"/>
    <property type="project" value="InterPro"/>
</dbReference>
<dbReference type="GO" id="GO:0016102">
    <property type="term" value="P:diterpenoid biosynthetic process"/>
    <property type="evidence" value="ECO:0007669"/>
    <property type="project" value="InterPro"/>
</dbReference>
<dbReference type="GO" id="GO:0033383">
    <property type="term" value="P:geranyl diphosphate metabolic process"/>
    <property type="evidence" value="ECO:0000314"/>
    <property type="project" value="UniProtKB"/>
</dbReference>
<dbReference type="CDD" id="cd00684">
    <property type="entry name" value="Terpene_cyclase_plant_C1"/>
    <property type="match status" value="1"/>
</dbReference>
<dbReference type="FunFam" id="1.10.600.10:FF:000007">
    <property type="entry name" value="Isoprene synthase, chloroplastic"/>
    <property type="match status" value="1"/>
</dbReference>
<dbReference type="Gene3D" id="1.10.600.10">
    <property type="entry name" value="Farnesyl Diphosphate Synthase"/>
    <property type="match status" value="1"/>
</dbReference>
<dbReference type="Gene3D" id="1.50.10.130">
    <property type="entry name" value="Terpene synthase, N-terminal domain"/>
    <property type="match status" value="1"/>
</dbReference>
<dbReference type="InterPro" id="IPR008949">
    <property type="entry name" value="Isoprenoid_synthase_dom_sf"/>
</dbReference>
<dbReference type="InterPro" id="IPR034741">
    <property type="entry name" value="Terpene_cyclase-like_1_C"/>
</dbReference>
<dbReference type="InterPro" id="IPR044814">
    <property type="entry name" value="Terpene_cyclase_plant_C1"/>
</dbReference>
<dbReference type="InterPro" id="IPR001906">
    <property type="entry name" value="Terpene_synth_N"/>
</dbReference>
<dbReference type="InterPro" id="IPR036965">
    <property type="entry name" value="Terpene_synth_N_sf"/>
</dbReference>
<dbReference type="InterPro" id="IPR050148">
    <property type="entry name" value="Terpene_synthase-like"/>
</dbReference>
<dbReference type="InterPro" id="IPR005630">
    <property type="entry name" value="Terpene_synthase_metal-bd"/>
</dbReference>
<dbReference type="InterPro" id="IPR008930">
    <property type="entry name" value="Terpenoid_cyclase/PrenylTrfase"/>
</dbReference>
<dbReference type="PANTHER" id="PTHR31225">
    <property type="entry name" value="OS04G0344100 PROTEIN-RELATED"/>
    <property type="match status" value="1"/>
</dbReference>
<dbReference type="PANTHER" id="PTHR31225:SF137">
    <property type="entry name" value="TERPENE SYNTHASE 11-RELATED"/>
    <property type="match status" value="1"/>
</dbReference>
<dbReference type="Pfam" id="PF01397">
    <property type="entry name" value="Terpene_synth"/>
    <property type="match status" value="1"/>
</dbReference>
<dbReference type="Pfam" id="PF03936">
    <property type="entry name" value="Terpene_synth_C"/>
    <property type="match status" value="1"/>
</dbReference>
<dbReference type="SFLD" id="SFLDS00005">
    <property type="entry name" value="Isoprenoid_Synthase_Type_I"/>
    <property type="match status" value="1"/>
</dbReference>
<dbReference type="SFLD" id="SFLDG01019">
    <property type="entry name" value="Terpene_Cyclase_Like_1_C_Termi"/>
    <property type="match status" value="1"/>
</dbReference>
<dbReference type="SUPFAM" id="SSF48239">
    <property type="entry name" value="Terpenoid cyclases/Protein prenyltransferases"/>
    <property type="match status" value="1"/>
</dbReference>
<dbReference type="SUPFAM" id="SSF48576">
    <property type="entry name" value="Terpenoid synthases"/>
    <property type="match status" value="1"/>
</dbReference>
<protein>
    <recommendedName>
        <fullName>Geraniol synthase, chloroplastic</fullName>
        <shortName>ObGES</shortName>
        <ecNumber evidence="4">3.1.7.11</ecNumber>
    </recommendedName>
</protein>
<comment type="function">
    <text evidence="4">Monoterpene synthase that catalyzes the formation of geraniol from geranyl diphosphate.</text>
</comment>
<comment type="catalytic activity">
    <reaction evidence="4">
        <text>(2E)-geranyl diphosphate + H2O = (2E)-geraniol + diphosphate</text>
        <dbReference type="Rhea" id="RHEA:32679"/>
        <dbReference type="ChEBI" id="CHEBI:15377"/>
        <dbReference type="ChEBI" id="CHEBI:17447"/>
        <dbReference type="ChEBI" id="CHEBI:33019"/>
        <dbReference type="ChEBI" id="CHEBI:58057"/>
        <dbReference type="EC" id="3.1.7.11"/>
    </reaction>
</comment>
<comment type="cofactor">
    <cofactor evidence="4">
        <name>Mn(2+)</name>
        <dbReference type="ChEBI" id="CHEBI:29035"/>
    </cofactor>
    <text evidence="4">Binds 3 Mn(2+) ions per subunit.</text>
</comment>
<comment type="biophysicochemical properties">
    <kinetics>
        <KM evidence="4">21 uM for geranyl diphosphate</KM>
        <KM evidence="4">51 uM for Mn(2+)</KM>
        <Vmax evidence="4">6.244 pmol/sec/mg enzyme</Vmax>
        <text evidence="4">kcat is 0.8 sec(-1) with geranyl diphosphate as substrate.</text>
    </kinetics>
    <phDependence>
        <text evidence="4">Optimum pH is 8.5.</text>
    </phDependence>
</comment>
<comment type="pathway">
    <text>Secondary metabolite biosynthesis; terpenoid biosynthesis.</text>
</comment>
<comment type="subunit">
    <text evidence="4">Homodimer.</text>
</comment>
<comment type="subcellular location">
    <subcellularLocation>
        <location evidence="2">Plastid</location>
        <location evidence="2">Chloroplast</location>
    </subcellularLocation>
</comment>
<comment type="tissue specificity">
    <text evidence="4">Expressed in the peltate glandular trichomes of the leaves.</text>
</comment>
<comment type="domain">
    <text evidence="1">The Asp-Asp-Xaa-Xaa-Asp/Glu (DDXXD/E) motif is important for the catalytic activity, presumably through binding to Mg(2+).</text>
</comment>
<comment type="miscellaneous">
    <text>Exclusively observed in the geraniol chemotype of this organism.</text>
</comment>
<comment type="similarity">
    <text evidence="5">Belongs to the terpene synthase family. Tpsb subfamily.</text>
</comment>
<sequence length="567" mass="64933">MSCARITVTLPYRSAKTSIQRGITHYPALIRPRFSACTPLASAMPLSSTPLINGDNSQRKNTRQHMEESSSKRREYLLEETTRKLQRNDTESVEKLKLIDNIQQLGIGYYFEDAINAVLRSPFSTGEEDLFTAALRFRLLRHNGIEISPEIFLKFKDERGKFDESDTLGLLSLYEASNLGVAGEEILEEAMEFAEARLRRSLSEPAAPLHGEVAQALDVPRHLRMARLEARRFIEQYGKQSDHDGDLLELAILDYNQVQAQHQSELTEIIRWWKELGLVDKLSFGRDRPLECFLWTVGLLPEPKYSSVRIELAKAISILLVIDDIFDTYGEMDDLILFTDAIRRWDLEAMEGLPEYMKICYMALYNTTNEVCYKVLRDTGRIVLLNLKSTWIDMIEGFMEEAKWFNGGSAPKLEEYIENGVSTAGAYMAFAHIFFLIGEGVTHQNSQLFTQKPYPKVFSAAGRILRLWDDLGTAKEEQERGDLASCVQLFMKEKSLTEEEARSRILEEIKGLWRDLNGELVYNKNLPLSIIKVALNMARASQVVYKHDQDTYFSSVDNYVDALFFTQ</sequence>
<keyword id="KW-0150">Chloroplast</keyword>
<keyword id="KW-0378">Hydrolase</keyword>
<keyword id="KW-0460">Magnesium</keyword>
<keyword id="KW-0464">Manganese</keyword>
<keyword id="KW-0479">Metal-binding</keyword>
<keyword id="KW-0934">Plastid</keyword>
<keyword id="KW-0809">Transit peptide</keyword>
<name>GERS_OCIBA</name>
<organism>
    <name type="scientific">Ocimum basilicum</name>
    <name type="common">Sweet basil</name>
    <dbReference type="NCBI Taxonomy" id="39350"/>
    <lineage>
        <taxon>Eukaryota</taxon>
        <taxon>Viridiplantae</taxon>
        <taxon>Streptophyta</taxon>
        <taxon>Embryophyta</taxon>
        <taxon>Tracheophyta</taxon>
        <taxon>Spermatophyta</taxon>
        <taxon>Magnoliopsida</taxon>
        <taxon>eudicotyledons</taxon>
        <taxon>Gunneridae</taxon>
        <taxon>Pentapetalae</taxon>
        <taxon>asterids</taxon>
        <taxon>lamiids</taxon>
        <taxon>Lamiales</taxon>
        <taxon>Lamiaceae</taxon>
        <taxon>Nepetoideae</taxon>
        <taxon>Ocimeae</taxon>
        <taxon>Ociminae</taxon>
        <taxon>Ocimum</taxon>
    </lineage>
</organism>